<feature type="peptide" id="PRO_0000248471" description="[Thr6]-phyllokinin" evidence="2">
    <location>
        <begin position="1"/>
        <end position="11"/>
    </location>
</feature>
<feature type="modified residue" description="Sulfotyrosine; partial" evidence="2">
    <location>
        <position position="11"/>
    </location>
</feature>
<keyword id="KW-0878">Amphibian defense peptide</keyword>
<keyword id="KW-0903">Direct protein sequencing</keyword>
<keyword id="KW-1213">G-protein coupled receptor impairing toxin</keyword>
<keyword id="KW-0964">Secreted</keyword>
<keyword id="KW-0765">Sulfation</keyword>
<keyword id="KW-0800">Toxin</keyword>
<keyword id="KW-0838">Vasoactive</keyword>
<keyword id="KW-0840">Vasodilator</keyword>
<evidence type="ECO:0000250" key="1"/>
<evidence type="ECO:0000269" key="2">
    <source>
    </source>
</evidence>
<evidence type="ECO:0000305" key="3"/>
<name>BRKP2_PITHY</name>
<accession>P84901</accession>
<reference evidence="3" key="1">
    <citation type="journal article" date="2006" name="Peptides">
        <title>Bradykinin-related peptides from Phyllomedusa hypochondrialis.</title>
        <authorList>
            <person name="Brand G.D."/>
            <person name="Krause F.C."/>
            <person name="Silva L.P."/>
            <person name="Leite J.R.S.A."/>
            <person name="Melo J.A.T."/>
            <person name="Prates M.V."/>
            <person name="Pesquero J.B."/>
            <person name="Santos E.L."/>
            <person name="Nakaie C.R."/>
            <person name="Costa-Neto C.M."/>
            <person name="Bloch C. Jr."/>
        </authorList>
    </citation>
    <scope>PROTEIN SEQUENCE</scope>
    <scope>MASS SPECTROMETRY</scope>
    <scope>SULFATION AT TYR-11</scope>
    <source>
        <tissue evidence="2">Skin secretion</tissue>
    </source>
</reference>
<protein>
    <recommendedName>
        <fullName>[Thr6]-phyllokinin</fullName>
    </recommendedName>
</protein>
<comment type="function">
    <text evidence="1">Produces in vitro relaxation of rat arterial smooth muscle and constriction of intestinal smooth muscle (By similarity). May target bradykinin receptors (BDKRB).</text>
</comment>
<comment type="subcellular location">
    <subcellularLocation>
        <location>Secreted</location>
    </subcellularLocation>
</comment>
<comment type="tissue specificity">
    <text evidence="2">Expressed by the skin glands.</text>
</comment>
<comment type="mass spectrometry"/>
<comment type="mass spectrometry">
    <text>Sulfated.</text>
</comment>
<comment type="similarity">
    <text evidence="3">Belongs to the bradykinin-related peptide family.</text>
</comment>
<sequence>RPPGFTPFRIY</sequence>
<proteinExistence type="evidence at protein level"/>
<dbReference type="GO" id="GO:0005576">
    <property type="term" value="C:extracellular region"/>
    <property type="evidence" value="ECO:0007669"/>
    <property type="project" value="UniProtKB-SubCell"/>
</dbReference>
<dbReference type="GO" id="GO:0090729">
    <property type="term" value="F:toxin activity"/>
    <property type="evidence" value="ECO:0007669"/>
    <property type="project" value="UniProtKB-KW"/>
</dbReference>
<dbReference type="GO" id="GO:0006952">
    <property type="term" value="P:defense response"/>
    <property type="evidence" value="ECO:0007669"/>
    <property type="project" value="UniProtKB-KW"/>
</dbReference>
<dbReference type="GO" id="GO:0042311">
    <property type="term" value="P:vasodilation"/>
    <property type="evidence" value="ECO:0007669"/>
    <property type="project" value="UniProtKB-KW"/>
</dbReference>
<organism>
    <name type="scientific">Pithecopus hypochondrialis</name>
    <name type="common">Orange-legged leaf frog</name>
    <name type="synonym">Phyllomedusa hypochondrialis</name>
    <dbReference type="NCBI Taxonomy" id="317381"/>
    <lineage>
        <taxon>Eukaryota</taxon>
        <taxon>Metazoa</taxon>
        <taxon>Chordata</taxon>
        <taxon>Craniata</taxon>
        <taxon>Vertebrata</taxon>
        <taxon>Euteleostomi</taxon>
        <taxon>Amphibia</taxon>
        <taxon>Batrachia</taxon>
        <taxon>Anura</taxon>
        <taxon>Neobatrachia</taxon>
        <taxon>Hyloidea</taxon>
        <taxon>Hylidae</taxon>
        <taxon>Phyllomedusinae</taxon>
        <taxon>Pithecopus</taxon>
    </lineage>
</organism>